<evidence type="ECO:0000255" key="1">
    <source>
        <dbReference type="HAMAP-Rule" id="MF_00075"/>
    </source>
</evidence>
<feature type="chain" id="PRO_0000095886" description="Translation initiation factor IF-1">
    <location>
        <begin position="1"/>
        <end position="72"/>
    </location>
</feature>
<feature type="domain" description="S1-like" evidence="1">
    <location>
        <begin position="1"/>
        <end position="72"/>
    </location>
</feature>
<protein>
    <recommendedName>
        <fullName evidence="1">Translation initiation factor IF-1</fullName>
    </recommendedName>
</protein>
<organism>
    <name type="scientific">Streptococcus thermophilus (strain ATCC BAA-250 / LMG 18311)</name>
    <dbReference type="NCBI Taxonomy" id="264199"/>
    <lineage>
        <taxon>Bacteria</taxon>
        <taxon>Bacillati</taxon>
        <taxon>Bacillota</taxon>
        <taxon>Bacilli</taxon>
        <taxon>Lactobacillales</taxon>
        <taxon>Streptococcaceae</taxon>
        <taxon>Streptococcus</taxon>
    </lineage>
</organism>
<name>IF1_STRT2</name>
<keyword id="KW-0963">Cytoplasm</keyword>
<keyword id="KW-0396">Initiation factor</keyword>
<keyword id="KW-0648">Protein biosynthesis</keyword>
<keyword id="KW-1185">Reference proteome</keyword>
<keyword id="KW-0694">RNA-binding</keyword>
<keyword id="KW-0699">rRNA-binding</keyword>
<sequence>MAKEDVIEIEGKVVETMPNAMFTVELENGHQILATVSGKIRKNYIRILVGDRVTVEMSPYDLTRGRITYRFK</sequence>
<comment type="function">
    <text evidence="1">One of the essential components for the initiation of protein synthesis. Stabilizes the binding of IF-2 and IF-3 on the 30S subunit to which N-formylmethionyl-tRNA(fMet) subsequently binds. Helps modulate mRNA selection, yielding the 30S pre-initiation complex (PIC). Upon addition of the 50S ribosomal subunit IF-1, IF-2 and IF-3 are released leaving the mature 70S translation initiation complex.</text>
</comment>
<comment type="subunit">
    <text evidence="1">Component of the 30S ribosomal translation pre-initiation complex which assembles on the 30S ribosome in the order IF-2 and IF-3, IF-1 and N-formylmethionyl-tRNA(fMet); mRNA recruitment can occur at any time during PIC assembly.</text>
</comment>
<comment type="subcellular location">
    <subcellularLocation>
        <location evidence="1">Cytoplasm</location>
    </subcellularLocation>
</comment>
<comment type="similarity">
    <text evidence="1">Belongs to the IF-1 family.</text>
</comment>
<dbReference type="EMBL" id="CP000023">
    <property type="protein sequence ID" value="AAV61510.1"/>
    <property type="molecule type" value="Genomic_DNA"/>
</dbReference>
<dbReference type="RefSeq" id="WP_001040189.1">
    <property type="nucleotide sequence ID" value="NC_006448.1"/>
</dbReference>
<dbReference type="SMR" id="Q5M2D5"/>
<dbReference type="STRING" id="264199.stu1912"/>
<dbReference type="GeneID" id="98392414"/>
<dbReference type="KEGG" id="stl:stu1912"/>
<dbReference type="eggNOG" id="COG0361">
    <property type="taxonomic scope" value="Bacteria"/>
</dbReference>
<dbReference type="HOGENOM" id="CLU_151267_1_0_9"/>
<dbReference type="Proteomes" id="UP000001170">
    <property type="component" value="Chromosome"/>
</dbReference>
<dbReference type="GO" id="GO:0005829">
    <property type="term" value="C:cytosol"/>
    <property type="evidence" value="ECO:0007669"/>
    <property type="project" value="TreeGrafter"/>
</dbReference>
<dbReference type="GO" id="GO:0043022">
    <property type="term" value="F:ribosome binding"/>
    <property type="evidence" value="ECO:0007669"/>
    <property type="project" value="UniProtKB-UniRule"/>
</dbReference>
<dbReference type="GO" id="GO:0019843">
    <property type="term" value="F:rRNA binding"/>
    <property type="evidence" value="ECO:0007669"/>
    <property type="project" value="UniProtKB-UniRule"/>
</dbReference>
<dbReference type="GO" id="GO:0003743">
    <property type="term" value="F:translation initiation factor activity"/>
    <property type="evidence" value="ECO:0007669"/>
    <property type="project" value="UniProtKB-UniRule"/>
</dbReference>
<dbReference type="CDD" id="cd04451">
    <property type="entry name" value="S1_IF1"/>
    <property type="match status" value="1"/>
</dbReference>
<dbReference type="FunFam" id="2.40.50.140:FF:000002">
    <property type="entry name" value="Translation initiation factor IF-1"/>
    <property type="match status" value="1"/>
</dbReference>
<dbReference type="Gene3D" id="2.40.50.140">
    <property type="entry name" value="Nucleic acid-binding proteins"/>
    <property type="match status" value="1"/>
</dbReference>
<dbReference type="HAMAP" id="MF_00075">
    <property type="entry name" value="IF_1"/>
    <property type="match status" value="1"/>
</dbReference>
<dbReference type="InterPro" id="IPR012340">
    <property type="entry name" value="NA-bd_OB-fold"/>
</dbReference>
<dbReference type="InterPro" id="IPR006196">
    <property type="entry name" value="RNA-binding_domain_S1_IF1"/>
</dbReference>
<dbReference type="InterPro" id="IPR003029">
    <property type="entry name" value="S1_domain"/>
</dbReference>
<dbReference type="InterPro" id="IPR004368">
    <property type="entry name" value="TIF_IF1"/>
</dbReference>
<dbReference type="NCBIfam" id="TIGR00008">
    <property type="entry name" value="infA"/>
    <property type="match status" value="1"/>
</dbReference>
<dbReference type="PANTHER" id="PTHR33370">
    <property type="entry name" value="TRANSLATION INITIATION FACTOR IF-1, CHLOROPLASTIC"/>
    <property type="match status" value="1"/>
</dbReference>
<dbReference type="PANTHER" id="PTHR33370:SF1">
    <property type="entry name" value="TRANSLATION INITIATION FACTOR IF-1, CHLOROPLASTIC"/>
    <property type="match status" value="1"/>
</dbReference>
<dbReference type="Pfam" id="PF01176">
    <property type="entry name" value="eIF-1a"/>
    <property type="match status" value="1"/>
</dbReference>
<dbReference type="SMART" id="SM00316">
    <property type="entry name" value="S1"/>
    <property type="match status" value="1"/>
</dbReference>
<dbReference type="SUPFAM" id="SSF50249">
    <property type="entry name" value="Nucleic acid-binding proteins"/>
    <property type="match status" value="1"/>
</dbReference>
<dbReference type="PROSITE" id="PS50832">
    <property type="entry name" value="S1_IF1_TYPE"/>
    <property type="match status" value="1"/>
</dbReference>
<reference key="1">
    <citation type="journal article" date="2004" name="Nat. Biotechnol.">
        <title>Complete sequence and comparative genome analysis of the dairy bacterium Streptococcus thermophilus.</title>
        <authorList>
            <person name="Bolotin A."/>
            <person name="Quinquis B."/>
            <person name="Renault P."/>
            <person name="Sorokin A."/>
            <person name="Ehrlich S.D."/>
            <person name="Kulakauskas S."/>
            <person name="Lapidus A."/>
            <person name="Goltsman E."/>
            <person name="Mazur M."/>
            <person name="Pusch G.D."/>
            <person name="Fonstein M."/>
            <person name="Overbeek R."/>
            <person name="Kyprides N."/>
            <person name="Purnelle B."/>
            <person name="Prozzi D."/>
            <person name="Ngui K."/>
            <person name="Masuy D."/>
            <person name="Hancy F."/>
            <person name="Burteau S."/>
            <person name="Boutry M."/>
            <person name="Delcour J."/>
            <person name="Goffeau A."/>
            <person name="Hols P."/>
        </authorList>
    </citation>
    <scope>NUCLEOTIDE SEQUENCE [LARGE SCALE GENOMIC DNA]</scope>
    <source>
        <strain>ATCC BAA-250 / LMG 18311</strain>
    </source>
</reference>
<proteinExistence type="inferred from homology"/>
<gene>
    <name evidence="1" type="primary">infA</name>
    <name type="ordered locus">stu1912</name>
</gene>
<accession>Q5M2D5</accession>